<proteinExistence type="inferred from homology"/>
<accession>Q05FI2</accession>
<comment type="function">
    <text evidence="1">Catalyzes the GTP-dependent ribosomal translocation step during translation elongation. During this step, the ribosome changes from the pre-translocational (PRE) to the post-translocational (POST) state as the newly formed A-site-bound peptidyl-tRNA and P-site-bound deacylated tRNA move to the P and E sites, respectively. Catalyzes the coordinated movement of the two tRNA molecules, the mRNA and conformational changes in the ribosome.</text>
</comment>
<comment type="subcellular location">
    <subcellularLocation>
        <location evidence="1">Cytoplasm</location>
    </subcellularLocation>
</comment>
<comment type="similarity">
    <text evidence="1">Belongs to the TRAFAC class translation factor GTPase superfamily. Classic translation factor GTPase family. EF-G/EF-2 subfamily.</text>
</comment>
<keyword id="KW-0963">Cytoplasm</keyword>
<keyword id="KW-0251">Elongation factor</keyword>
<keyword id="KW-0342">GTP-binding</keyword>
<keyword id="KW-0547">Nucleotide-binding</keyword>
<keyword id="KW-0648">Protein biosynthesis</keyword>
<feature type="chain" id="PRO_0000335836" description="Elongation factor G">
    <location>
        <begin position="1"/>
        <end position="681"/>
    </location>
</feature>
<feature type="domain" description="tr-type G">
    <location>
        <begin position="5"/>
        <end position="279"/>
    </location>
</feature>
<feature type="binding site" evidence="1">
    <location>
        <begin position="14"/>
        <end position="21"/>
    </location>
    <ligand>
        <name>GTP</name>
        <dbReference type="ChEBI" id="CHEBI:37565"/>
    </ligand>
</feature>
<feature type="binding site" evidence="1">
    <location>
        <begin position="82"/>
        <end position="86"/>
    </location>
    <ligand>
        <name>GTP</name>
        <dbReference type="ChEBI" id="CHEBI:37565"/>
    </ligand>
</feature>
<feature type="binding site" evidence="1">
    <location>
        <begin position="136"/>
        <end position="139"/>
    </location>
    <ligand>
        <name>GTP</name>
        <dbReference type="ChEBI" id="CHEBI:37565"/>
    </ligand>
</feature>
<name>EFG_CARRP</name>
<dbReference type="EMBL" id="AP009180">
    <property type="protein sequence ID" value="BAF35189.1"/>
    <property type="molecule type" value="Genomic_DNA"/>
</dbReference>
<dbReference type="RefSeq" id="WP_011672381.1">
    <property type="nucleotide sequence ID" value="NC_008512.1"/>
</dbReference>
<dbReference type="SMR" id="Q05FI2"/>
<dbReference type="STRING" id="387662.CRP_158"/>
<dbReference type="KEGG" id="crp:CRP_158"/>
<dbReference type="HOGENOM" id="CLU_002794_4_1_6"/>
<dbReference type="OrthoDB" id="9801472at2"/>
<dbReference type="Proteomes" id="UP000000777">
    <property type="component" value="Chromosome"/>
</dbReference>
<dbReference type="GO" id="GO:0005737">
    <property type="term" value="C:cytoplasm"/>
    <property type="evidence" value="ECO:0007669"/>
    <property type="project" value="UniProtKB-SubCell"/>
</dbReference>
<dbReference type="GO" id="GO:0005525">
    <property type="term" value="F:GTP binding"/>
    <property type="evidence" value="ECO:0007669"/>
    <property type="project" value="UniProtKB-UniRule"/>
</dbReference>
<dbReference type="GO" id="GO:0003924">
    <property type="term" value="F:GTPase activity"/>
    <property type="evidence" value="ECO:0007669"/>
    <property type="project" value="InterPro"/>
</dbReference>
<dbReference type="GO" id="GO:0097216">
    <property type="term" value="F:guanosine tetraphosphate binding"/>
    <property type="evidence" value="ECO:0007669"/>
    <property type="project" value="UniProtKB-ARBA"/>
</dbReference>
<dbReference type="GO" id="GO:0003746">
    <property type="term" value="F:translation elongation factor activity"/>
    <property type="evidence" value="ECO:0007669"/>
    <property type="project" value="UniProtKB-UniRule"/>
</dbReference>
<dbReference type="GO" id="GO:0032790">
    <property type="term" value="P:ribosome disassembly"/>
    <property type="evidence" value="ECO:0007669"/>
    <property type="project" value="TreeGrafter"/>
</dbReference>
<dbReference type="CDD" id="cd01886">
    <property type="entry name" value="EF-G"/>
    <property type="match status" value="1"/>
</dbReference>
<dbReference type="CDD" id="cd16262">
    <property type="entry name" value="EFG_III"/>
    <property type="match status" value="1"/>
</dbReference>
<dbReference type="CDD" id="cd01434">
    <property type="entry name" value="EFG_mtEFG1_IV"/>
    <property type="match status" value="1"/>
</dbReference>
<dbReference type="CDD" id="cd03713">
    <property type="entry name" value="EFG_mtEFG_C"/>
    <property type="match status" value="1"/>
</dbReference>
<dbReference type="CDD" id="cd04088">
    <property type="entry name" value="EFG_mtEFG_II"/>
    <property type="match status" value="1"/>
</dbReference>
<dbReference type="FunFam" id="3.30.230.10:FF:000003">
    <property type="entry name" value="Elongation factor G"/>
    <property type="match status" value="1"/>
</dbReference>
<dbReference type="FunFam" id="3.30.70.240:FF:000001">
    <property type="entry name" value="Elongation factor G"/>
    <property type="match status" value="1"/>
</dbReference>
<dbReference type="FunFam" id="3.40.50.300:FF:000029">
    <property type="entry name" value="Elongation factor G"/>
    <property type="match status" value="1"/>
</dbReference>
<dbReference type="FunFam" id="3.30.70.870:FF:000002">
    <property type="entry name" value="Translation elongation factor 2"/>
    <property type="match status" value="1"/>
</dbReference>
<dbReference type="Gene3D" id="3.30.230.10">
    <property type="match status" value="1"/>
</dbReference>
<dbReference type="Gene3D" id="3.30.70.240">
    <property type="match status" value="1"/>
</dbReference>
<dbReference type="Gene3D" id="3.30.70.870">
    <property type="entry name" value="Elongation Factor G (Translational Gtpase), domain 3"/>
    <property type="match status" value="1"/>
</dbReference>
<dbReference type="Gene3D" id="3.40.50.300">
    <property type="entry name" value="P-loop containing nucleotide triphosphate hydrolases"/>
    <property type="match status" value="1"/>
</dbReference>
<dbReference type="Gene3D" id="2.40.30.10">
    <property type="entry name" value="Translation factors"/>
    <property type="match status" value="1"/>
</dbReference>
<dbReference type="HAMAP" id="MF_00054_B">
    <property type="entry name" value="EF_G_EF_2_B"/>
    <property type="match status" value="1"/>
</dbReference>
<dbReference type="InterPro" id="IPR053905">
    <property type="entry name" value="EF-G-like_DII"/>
</dbReference>
<dbReference type="InterPro" id="IPR041095">
    <property type="entry name" value="EFG_II"/>
</dbReference>
<dbReference type="InterPro" id="IPR009022">
    <property type="entry name" value="EFG_III"/>
</dbReference>
<dbReference type="InterPro" id="IPR035647">
    <property type="entry name" value="EFG_III/V"/>
</dbReference>
<dbReference type="InterPro" id="IPR047872">
    <property type="entry name" value="EFG_IV"/>
</dbReference>
<dbReference type="InterPro" id="IPR035649">
    <property type="entry name" value="EFG_V"/>
</dbReference>
<dbReference type="InterPro" id="IPR000640">
    <property type="entry name" value="EFG_V-like"/>
</dbReference>
<dbReference type="InterPro" id="IPR031157">
    <property type="entry name" value="G_TR_CS"/>
</dbReference>
<dbReference type="InterPro" id="IPR027417">
    <property type="entry name" value="P-loop_NTPase"/>
</dbReference>
<dbReference type="InterPro" id="IPR020568">
    <property type="entry name" value="Ribosomal_Su5_D2-typ_SF"/>
</dbReference>
<dbReference type="InterPro" id="IPR014721">
    <property type="entry name" value="Ribsml_uS5_D2-typ_fold_subgr"/>
</dbReference>
<dbReference type="InterPro" id="IPR005225">
    <property type="entry name" value="Small_GTP-bd"/>
</dbReference>
<dbReference type="InterPro" id="IPR000795">
    <property type="entry name" value="T_Tr_GTP-bd_dom"/>
</dbReference>
<dbReference type="InterPro" id="IPR009000">
    <property type="entry name" value="Transl_B-barrel_sf"/>
</dbReference>
<dbReference type="InterPro" id="IPR004540">
    <property type="entry name" value="Transl_elong_EFG/EF2"/>
</dbReference>
<dbReference type="InterPro" id="IPR005517">
    <property type="entry name" value="Transl_elong_EFG/EF2_IV"/>
</dbReference>
<dbReference type="NCBIfam" id="TIGR00484">
    <property type="entry name" value="EF-G"/>
    <property type="match status" value="1"/>
</dbReference>
<dbReference type="NCBIfam" id="NF009381">
    <property type="entry name" value="PRK12740.1-5"/>
    <property type="match status" value="1"/>
</dbReference>
<dbReference type="NCBIfam" id="TIGR00231">
    <property type="entry name" value="small_GTP"/>
    <property type="match status" value="1"/>
</dbReference>
<dbReference type="PANTHER" id="PTHR43261:SF1">
    <property type="entry name" value="RIBOSOME-RELEASING FACTOR 2, MITOCHONDRIAL"/>
    <property type="match status" value="1"/>
</dbReference>
<dbReference type="PANTHER" id="PTHR43261">
    <property type="entry name" value="TRANSLATION ELONGATION FACTOR G-RELATED"/>
    <property type="match status" value="1"/>
</dbReference>
<dbReference type="Pfam" id="PF22042">
    <property type="entry name" value="EF-G_D2"/>
    <property type="match status" value="1"/>
</dbReference>
<dbReference type="Pfam" id="PF00679">
    <property type="entry name" value="EFG_C"/>
    <property type="match status" value="1"/>
</dbReference>
<dbReference type="Pfam" id="PF14492">
    <property type="entry name" value="EFG_III"/>
    <property type="match status" value="1"/>
</dbReference>
<dbReference type="Pfam" id="PF03764">
    <property type="entry name" value="EFG_IV"/>
    <property type="match status" value="1"/>
</dbReference>
<dbReference type="Pfam" id="PF00009">
    <property type="entry name" value="GTP_EFTU"/>
    <property type="match status" value="1"/>
</dbReference>
<dbReference type="PRINTS" id="PR00315">
    <property type="entry name" value="ELONGATNFCT"/>
</dbReference>
<dbReference type="SMART" id="SM00838">
    <property type="entry name" value="EFG_C"/>
    <property type="match status" value="1"/>
</dbReference>
<dbReference type="SMART" id="SM00889">
    <property type="entry name" value="EFG_IV"/>
    <property type="match status" value="1"/>
</dbReference>
<dbReference type="SUPFAM" id="SSF54980">
    <property type="entry name" value="EF-G C-terminal domain-like"/>
    <property type="match status" value="2"/>
</dbReference>
<dbReference type="SUPFAM" id="SSF52540">
    <property type="entry name" value="P-loop containing nucleoside triphosphate hydrolases"/>
    <property type="match status" value="1"/>
</dbReference>
<dbReference type="SUPFAM" id="SSF54211">
    <property type="entry name" value="Ribosomal protein S5 domain 2-like"/>
    <property type="match status" value="1"/>
</dbReference>
<dbReference type="SUPFAM" id="SSF50447">
    <property type="entry name" value="Translation proteins"/>
    <property type="match status" value="1"/>
</dbReference>
<dbReference type="PROSITE" id="PS00301">
    <property type="entry name" value="G_TR_1"/>
    <property type="match status" value="1"/>
</dbReference>
<dbReference type="PROSITE" id="PS51722">
    <property type="entry name" value="G_TR_2"/>
    <property type="match status" value="1"/>
</dbReference>
<gene>
    <name evidence="1" type="primary">fusA</name>
    <name type="ordered locus">CRP_158</name>
</gene>
<sequence>MNDIKNIRNIGIIAHVDAGKTTTTERILFFSGFSHKIGEVHTGNTITDWMKQEQERGITITSASVTFFWKTNFYNSSINLIDTPGHVDFTIEVERSLRVLDGAVILICASSGIQPQTETVWNQSEKFNIPKILFVNKLDRIGAKYLSIIENIKKKFFCNILIINLNIGIENSFSGIIDLINMKELIWNNSQLEIRNITNKNFDISNKYRNILLETLSEYDDIFLEKYINSNFSIKDIIESIRKLVILNKIIPIACGSSLKNKGIEFLLDSIVNFLPSPIDIGIKNVSNINYSVNIKSKFLALLFKVFNDPYLGLLSFIRIYSGKIEPGQIIFNNSKNIKEKIFRIIRMFANSKKDLNIASAGDIVVLIGLKNSFTGDTLSFDNEKVLLEKINIPLPVISVSVEPIVKNDYEKLLNLINKFCKEDPSLLFKINENTGELILSGMGELHLEIIIDRINNEFNIKTKTSKPQVSYKESIKKTIIQEGKYIKQTGGRGQYGHVVLKIEPILIEKDDFIFKIEVVGGVIPKEYFLSIEKGILEQIKCGVVLGYPVTKIKITLINGSFHPVDSSEYAFKNAASIALKEALKKANSFLLEPIMKVEIISPKEYLGIVISDISKKRGNIISVVDNNNNLKIINSLIPLRELFGYSTDLRSNTKGRANYNMEFHNYSETPNYILEKIKKK</sequence>
<organism>
    <name type="scientific">Carsonella ruddii (strain PV)</name>
    <dbReference type="NCBI Taxonomy" id="387662"/>
    <lineage>
        <taxon>Bacteria</taxon>
        <taxon>Pseudomonadati</taxon>
        <taxon>Pseudomonadota</taxon>
        <taxon>Gammaproteobacteria</taxon>
        <taxon>Oceanospirillales</taxon>
        <taxon>Halomonadaceae</taxon>
        <taxon>Zymobacter group</taxon>
        <taxon>Candidatus Carsonella</taxon>
    </lineage>
</organism>
<evidence type="ECO:0000255" key="1">
    <source>
        <dbReference type="HAMAP-Rule" id="MF_00054"/>
    </source>
</evidence>
<reference key="1">
    <citation type="journal article" date="2006" name="Science">
        <title>The 160-kilobase genome of the bacterial endosymbiont Carsonella.</title>
        <authorList>
            <person name="Nakabachi A."/>
            <person name="Yamashita A."/>
            <person name="Toh H."/>
            <person name="Ishikawa H."/>
            <person name="Dunbar H.E."/>
            <person name="Moran N.A."/>
            <person name="Hattori M."/>
        </authorList>
    </citation>
    <scope>NUCLEOTIDE SEQUENCE [LARGE SCALE GENOMIC DNA]</scope>
    <source>
        <strain>PV</strain>
    </source>
</reference>
<protein>
    <recommendedName>
        <fullName evidence="1">Elongation factor G</fullName>
        <shortName evidence="1">EF-G</shortName>
    </recommendedName>
</protein>